<dbReference type="EMBL" id="AY009089">
    <property type="protein sequence ID" value="AAG37657.1"/>
    <property type="molecule type" value="Genomic_DNA"/>
</dbReference>
<dbReference type="SMR" id="Q775N7"/>
<dbReference type="Proteomes" id="UP000107153">
    <property type="component" value="Genome"/>
</dbReference>
<dbReference type="GO" id="GO:0003779">
    <property type="term" value="F:actin binding"/>
    <property type="evidence" value="ECO:0007669"/>
    <property type="project" value="UniProtKB-KW"/>
</dbReference>
<dbReference type="Gene3D" id="3.30.450.30">
    <property type="entry name" value="Dynein light chain 2a, cytoplasmic"/>
    <property type="match status" value="1"/>
</dbReference>
<dbReference type="InterPro" id="IPR048278">
    <property type="entry name" value="PFN"/>
</dbReference>
<dbReference type="InterPro" id="IPR005455">
    <property type="entry name" value="PFN_euk"/>
</dbReference>
<dbReference type="InterPro" id="IPR036140">
    <property type="entry name" value="PFN_sf"/>
</dbReference>
<dbReference type="Pfam" id="PF00235">
    <property type="entry name" value="Profilin"/>
    <property type="match status" value="1"/>
</dbReference>
<dbReference type="SMART" id="SM00392">
    <property type="entry name" value="PROF"/>
    <property type="match status" value="1"/>
</dbReference>
<dbReference type="SUPFAM" id="SSF55770">
    <property type="entry name" value="Profilin (actin-binding protein)"/>
    <property type="match status" value="1"/>
</dbReference>
<gene>
    <name type="ordered locus">CMP158R</name>
</gene>
<feature type="chain" id="PRO_0000199686" description="Profilin">
    <location>
        <begin position="1"/>
        <end position="133"/>
    </location>
</feature>
<reference key="1">
    <citation type="journal article" date="2002" name="J. Gen. Virol.">
        <title>The sequence of camelpox virus shows it is most closely related to variola virus, the cause of smallpox.</title>
        <authorList>
            <person name="Gubser C."/>
            <person name="Smith G.L."/>
        </authorList>
    </citation>
    <scope>NUCLEOTIDE SEQUENCE [LARGE SCALE GENOMIC DNA]</scope>
</reference>
<protein>
    <recommendedName>
        <fullName>Profilin</fullName>
    </recommendedName>
</protein>
<proteinExistence type="inferred from homology"/>
<organism>
    <name type="scientific">Camelpox virus (strain CMS)</name>
    <dbReference type="NCBI Taxonomy" id="203172"/>
    <lineage>
        <taxon>Viruses</taxon>
        <taxon>Varidnaviria</taxon>
        <taxon>Bamfordvirae</taxon>
        <taxon>Nucleocytoviricota</taxon>
        <taxon>Pokkesviricetes</taxon>
        <taxon>Chitovirales</taxon>
        <taxon>Poxviridae</taxon>
        <taxon>Chordopoxvirinae</taxon>
        <taxon>Orthopoxvirus</taxon>
        <taxon>Camelpox virus</taxon>
    </lineage>
</organism>
<keyword id="KW-0009">Actin-binding</keyword>
<keyword id="KW-1185">Reference proteome</keyword>
<name>PROF_CAMPS</name>
<comment type="function">
    <text evidence="1">More likely to influence phosphoinositide metabolism than actin assembly.</text>
</comment>
<comment type="similarity">
    <text evidence="2">Belongs to the profilin family.</text>
</comment>
<accession>Q775N7</accession>
<organismHost>
    <name type="scientific">Camelus</name>
    <dbReference type="NCBI Taxonomy" id="9836"/>
</organismHost>
<sequence>MVEWHKIIEDISKNNKFEDAAIVDYKTTKNVLAAIPNRTFAKINPGEVIPLITNHNILKPLIGQKFCIVYTNSLMDENTYAMELLTGYAPVSPIVIARTHTALIFLMGKPTTSRRDVYRTCRDHATRVRATGN</sequence>
<evidence type="ECO:0000250" key="1"/>
<evidence type="ECO:0000305" key="2"/>